<comment type="function">
    <text evidence="1">Plays a role in maintaining the mitochondrial genome and in controlling the mtDNA escape. Involved in the regulation of mtDNA nucleotide structure and number. May have a dispensable role in early maturation of pre-rRNA (By similarity).</text>
</comment>
<comment type="subcellular location">
    <subcellularLocation>
        <location evidence="1">Mitochondrion inner membrane</location>
        <topology evidence="1">Single-pass membrane protein</topology>
    </subcellularLocation>
</comment>
<comment type="similarity">
    <text evidence="5">Belongs to the YME2 family.</text>
</comment>
<comment type="sequence caution" evidence="5">
    <conflict type="erroneous gene model prediction">
        <sequence resource="EMBL-CDS" id="CAD70287"/>
    </conflict>
</comment>
<proteinExistence type="inferred from homology"/>
<accession>Q873L8</accession>
<organism>
    <name type="scientific">Neurospora crassa (strain ATCC 24698 / 74-OR23-1A / CBS 708.71 / DSM 1257 / FGSC 987)</name>
    <dbReference type="NCBI Taxonomy" id="367110"/>
    <lineage>
        <taxon>Eukaryota</taxon>
        <taxon>Fungi</taxon>
        <taxon>Dikarya</taxon>
        <taxon>Ascomycota</taxon>
        <taxon>Pezizomycotina</taxon>
        <taxon>Sordariomycetes</taxon>
        <taxon>Sordariomycetidae</taxon>
        <taxon>Sordariales</taxon>
        <taxon>Sordariaceae</taxon>
        <taxon>Neurospora</taxon>
    </lineage>
</organism>
<dbReference type="EMBL" id="BX284745">
    <property type="protein sequence ID" value="CAD70287.1"/>
    <property type="status" value="ALT_SEQ"/>
    <property type="molecule type" value="Genomic_DNA"/>
</dbReference>
<dbReference type="EMBL" id="CM002237">
    <property type="protein sequence ID" value="EAA33940.2"/>
    <property type="molecule type" value="Genomic_DNA"/>
</dbReference>
<dbReference type="RefSeq" id="XP_963176.2">
    <property type="nucleotide sequence ID" value="XM_958083.3"/>
</dbReference>
<dbReference type="FunCoup" id="Q873L8">
    <property type="interactions" value="117"/>
</dbReference>
<dbReference type="STRING" id="367110.Q873L8"/>
<dbReference type="PaxDb" id="5141-EFNCRP00000009426"/>
<dbReference type="EnsemblFungi" id="EAA33940">
    <property type="protein sequence ID" value="EAA33940"/>
    <property type="gene ID" value="NCU09598"/>
</dbReference>
<dbReference type="GeneID" id="3879324"/>
<dbReference type="KEGG" id="ncr:NCU09598"/>
<dbReference type="VEuPathDB" id="FungiDB:NCU09598"/>
<dbReference type="HOGENOM" id="CLU_007861_0_0_1"/>
<dbReference type="InParanoid" id="Q873L8"/>
<dbReference type="OrthoDB" id="10267654at2759"/>
<dbReference type="Proteomes" id="UP000001805">
    <property type="component" value="Chromosome 6, Linkage Group II"/>
</dbReference>
<dbReference type="GO" id="GO:0005743">
    <property type="term" value="C:mitochondrial inner membrane"/>
    <property type="evidence" value="ECO:0000318"/>
    <property type="project" value="GO_Central"/>
</dbReference>
<dbReference type="GO" id="GO:0003723">
    <property type="term" value="F:RNA binding"/>
    <property type="evidence" value="ECO:0007669"/>
    <property type="project" value="UniProtKB-KW"/>
</dbReference>
<dbReference type="GO" id="GO:0000002">
    <property type="term" value="P:mitochondrial genome maintenance"/>
    <property type="evidence" value="ECO:0000318"/>
    <property type="project" value="GO_Central"/>
</dbReference>
<dbReference type="GO" id="GO:0006397">
    <property type="term" value="P:mRNA processing"/>
    <property type="evidence" value="ECO:0007669"/>
    <property type="project" value="UniProtKB-KW"/>
</dbReference>
<dbReference type="CDD" id="cd12433">
    <property type="entry name" value="RRM_Yme2p_like"/>
    <property type="match status" value="1"/>
</dbReference>
<dbReference type="FunFam" id="3.30.70.330:FF:000959">
    <property type="entry name" value="Mitochondrial escape protein 2"/>
    <property type="match status" value="1"/>
</dbReference>
<dbReference type="Gene3D" id="3.30.70.330">
    <property type="match status" value="1"/>
</dbReference>
<dbReference type="Gene3D" id="3.40.50.300">
    <property type="entry name" value="P-loop containing nucleotide triphosphate hydrolases"/>
    <property type="match status" value="1"/>
</dbReference>
<dbReference type="InterPro" id="IPR018850">
    <property type="entry name" value="Mt_escape_2_C"/>
</dbReference>
<dbReference type="InterPro" id="IPR012677">
    <property type="entry name" value="Nucleotide-bd_a/b_plait_sf"/>
</dbReference>
<dbReference type="InterPro" id="IPR027417">
    <property type="entry name" value="P-loop_NTPase"/>
</dbReference>
<dbReference type="InterPro" id="IPR035979">
    <property type="entry name" value="RBD_domain_sf"/>
</dbReference>
<dbReference type="InterPro" id="IPR000504">
    <property type="entry name" value="RRM_dom"/>
</dbReference>
<dbReference type="InterPro" id="IPR039627">
    <property type="entry name" value="Yme2_C"/>
</dbReference>
<dbReference type="InterPro" id="IPR034260">
    <property type="entry name" value="Yme2_RRM"/>
</dbReference>
<dbReference type="PANTHER" id="PTHR32198">
    <property type="entry name" value="MITOCHONDRIAL ESCAPE PROTEIN 2"/>
    <property type="match status" value="1"/>
</dbReference>
<dbReference type="PANTHER" id="PTHR32198:SF2">
    <property type="entry name" value="MITOCHONDRIAL ESCAPE PROTEIN 2"/>
    <property type="match status" value="1"/>
</dbReference>
<dbReference type="Pfam" id="PF10443">
    <property type="entry name" value="RNA12"/>
    <property type="match status" value="1"/>
</dbReference>
<dbReference type="Pfam" id="PF00076">
    <property type="entry name" value="RRM_1"/>
    <property type="match status" value="1"/>
</dbReference>
<dbReference type="SUPFAM" id="SSF54928">
    <property type="entry name" value="RNA-binding domain, RBD"/>
    <property type="match status" value="1"/>
</dbReference>
<dbReference type="PROSITE" id="PS50102">
    <property type="entry name" value="RRM"/>
    <property type="match status" value="1"/>
</dbReference>
<reference key="1">
    <citation type="journal article" date="2003" name="Nucleic Acids Res.">
        <title>What's in the genome of a filamentous fungus? Analysis of the Neurospora genome sequence.</title>
        <authorList>
            <person name="Mannhaupt G."/>
            <person name="Montrone C."/>
            <person name="Haase D."/>
            <person name="Mewes H.-W."/>
            <person name="Aign V."/>
            <person name="Hoheisel J.D."/>
            <person name="Fartmann B."/>
            <person name="Nyakatura G."/>
            <person name="Kempken F."/>
            <person name="Maier J."/>
            <person name="Schulte U."/>
        </authorList>
    </citation>
    <scope>NUCLEOTIDE SEQUENCE [LARGE SCALE GENOMIC DNA]</scope>
    <source>
        <strain>ATCC 24698 / 74-OR23-1A / CBS 708.71 / DSM 1257 / FGSC 987</strain>
    </source>
</reference>
<reference key="2">
    <citation type="journal article" date="2003" name="Nature">
        <title>The genome sequence of the filamentous fungus Neurospora crassa.</title>
        <authorList>
            <person name="Galagan J.E."/>
            <person name="Calvo S.E."/>
            <person name="Borkovich K.A."/>
            <person name="Selker E.U."/>
            <person name="Read N.D."/>
            <person name="Jaffe D.B."/>
            <person name="FitzHugh W."/>
            <person name="Ma L.-J."/>
            <person name="Smirnov S."/>
            <person name="Purcell S."/>
            <person name="Rehman B."/>
            <person name="Elkins T."/>
            <person name="Engels R."/>
            <person name="Wang S."/>
            <person name="Nielsen C.B."/>
            <person name="Butler J."/>
            <person name="Endrizzi M."/>
            <person name="Qui D."/>
            <person name="Ianakiev P."/>
            <person name="Bell-Pedersen D."/>
            <person name="Nelson M.A."/>
            <person name="Werner-Washburne M."/>
            <person name="Selitrennikoff C.P."/>
            <person name="Kinsey J.A."/>
            <person name="Braun E.L."/>
            <person name="Zelter A."/>
            <person name="Schulte U."/>
            <person name="Kothe G.O."/>
            <person name="Jedd G."/>
            <person name="Mewes H.-W."/>
            <person name="Staben C."/>
            <person name="Marcotte E."/>
            <person name="Greenberg D."/>
            <person name="Roy A."/>
            <person name="Foley K."/>
            <person name="Naylor J."/>
            <person name="Stange-Thomann N."/>
            <person name="Barrett R."/>
            <person name="Gnerre S."/>
            <person name="Kamal M."/>
            <person name="Kamvysselis M."/>
            <person name="Mauceli E.W."/>
            <person name="Bielke C."/>
            <person name="Rudd S."/>
            <person name="Frishman D."/>
            <person name="Krystofova S."/>
            <person name="Rasmussen C."/>
            <person name="Metzenberg R.L."/>
            <person name="Perkins D.D."/>
            <person name="Kroken S."/>
            <person name="Cogoni C."/>
            <person name="Macino G."/>
            <person name="Catcheside D.E.A."/>
            <person name="Li W."/>
            <person name="Pratt R.J."/>
            <person name="Osmani S.A."/>
            <person name="DeSouza C.P.C."/>
            <person name="Glass N.L."/>
            <person name="Orbach M.J."/>
            <person name="Berglund J.A."/>
            <person name="Voelker R."/>
            <person name="Yarden O."/>
            <person name="Plamann M."/>
            <person name="Seiler S."/>
            <person name="Dunlap J.C."/>
            <person name="Radford A."/>
            <person name="Aramayo R."/>
            <person name="Natvig D.O."/>
            <person name="Alex L.A."/>
            <person name="Mannhaupt G."/>
            <person name="Ebbole D.J."/>
            <person name="Freitag M."/>
            <person name="Paulsen I."/>
            <person name="Sachs M.S."/>
            <person name="Lander E.S."/>
            <person name="Nusbaum C."/>
            <person name="Birren B.W."/>
        </authorList>
    </citation>
    <scope>NUCLEOTIDE SEQUENCE [LARGE SCALE GENOMIC DNA]</scope>
    <source>
        <strain>ATCC 24698 / 74-OR23-1A / CBS 708.71 / DSM 1257 / FGSC 987</strain>
    </source>
</reference>
<name>YME2_NEUCR</name>
<feature type="transit peptide" description="Mitochondrion" evidence="2">
    <location>
        <begin position="1"/>
        <end position="41"/>
    </location>
</feature>
<feature type="chain" id="PRO_0000343127" description="Mitochondrial escape protein 2">
    <location>
        <begin position="42"/>
        <end position="867"/>
    </location>
</feature>
<feature type="topological domain" description="Mitochondrial matrix" evidence="2">
    <location>
        <begin position="42"/>
        <end position="308"/>
    </location>
</feature>
<feature type="transmembrane region" description="Helical" evidence="2">
    <location>
        <begin position="309"/>
        <end position="329"/>
    </location>
</feature>
<feature type="topological domain" description="Mitochondrial intermembrane" evidence="2">
    <location>
        <begin position="330"/>
        <end position="867"/>
    </location>
</feature>
<feature type="domain" description="RRM" evidence="3">
    <location>
        <begin position="203"/>
        <end position="293"/>
    </location>
</feature>
<feature type="region of interest" description="Disordered" evidence="4">
    <location>
        <begin position="1"/>
        <end position="20"/>
    </location>
</feature>
<feature type="region of interest" description="Disordered" evidence="4">
    <location>
        <begin position="44"/>
        <end position="66"/>
    </location>
</feature>
<feature type="region of interest" description="Disordered" evidence="4">
    <location>
        <begin position="614"/>
        <end position="647"/>
    </location>
</feature>
<feature type="coiled-coil region" evidence="2">
    <location>
        <begin position="797"/>
        <end position="857"/>
    </location>
</feature>
<feature type="compositionally biased region" description="Low complexity" evidence="4">
    <location>
        <begin position="48"/>
        <end position="59"/>
    </location>
</feature>
<feature type="compositionally biased region" description="Basic and acidic residues" evidence="4">
    <location>
        <begin position="614"/>
        <end position="639"/>
    </location>
</feature>
<evidence type="ECO:0000250" key="1"/>
<evidence type="ECO:0000255" key="2"/>
<evidence type="ECO:0000255" key="3">
    <source>
        <dbReference type="PROSITE-ProRule" id="PRU00176"/>
    </source>
</evidence>
<evidence type="ECO:0000256" key="4">
    <source>
        <dbReference type="SAM" id="MobiDB-lite"/>
    </source>
</evidence>
<evidence type="ECO:0000305" key="5"/>
<sequence length="867" mass="97179">MISAHILSRQATRPGHRGPRFTTHSTALLVQRSLGQGLPLAHRRTTRAWESTSSSTASTGSHKESGHIETAPHESLLFFNNLFPLKLSSILIWRPWTSEDLLQRFEQSSYSFIDPIRLVKRAINTHDQVPIEVTQIIPRLKDGGAFVKFTHPSDMSAAVVESKLSELLQNNPIKPWFNPFGRVKAGLVEGVPWLEDLYRLPRSRIRVEFVAAKDDASPAELSQETLYSIFRKFGKITEITSQPTDSKVLPRFAYIDFVLVRDAIMARNCMHGFVLREQGSKNATKLRLSYEQRVKAHHIWAWFTSHPRIVIPLVAALIAAFTVAVFDPIREFFVKAHVQKYFEFTNSRLYKWFKSQTSDILAFRRRKTEDAGLNALFTHRKDLIDSIQTGLLESVDTFTVVHGPRGSGKKELILDQVLKERSNVLHIDCKPVVEARGEAGTIGRLAFEVGYRPVFSWSNNISSLVDLAVQSTTGVKANFSENLESQVVKILQTTASALKQVGLSERKKEDKDADLSEDAYLEAHPERRPVIVIDHFLHKSEEKGVIYDRIADWAAALVQSNIAHVIFLTDDASYSKPLQRSLPDRVFRSVTLGDLSPDVAKKFVISQLQTDTKFAHDGQQKDSESGDQDNDNKNQKKDSNTPAPLDPTLLKELDTCITALGGRLTDLQVLARRLKIGQSPRKAVQEIIDSTASDILRMFLLSKSSTSDRKYTTEQAWYLISHLAASPSSSIPYNSVLLSNTFASSPETALEALANAELITVKSQNGMPSEIKAGKPVYQAAFQKLASDEKVKARMDLLVLTELAKMETQKIEKVEQELVMLQGLMARRPGDVSERVEYLLEKMKGGQARLKGLEKEMGVVKGQMVKG</sequence>
<protein>
    <recommendedName>
        <fullName>Mitochondrial escape protein 2</fullName>
    </recommendedName>
    <alternativeName>
        <fullName>mRNA-splicing protein 45</fullName>
    </alternativeName>
</protein>
<keyword id="KW-0175">Coiled coil</keyword>
<keyword id="KW-0472">Membrane</keyword>
<keyword id="KW-0496">Mitochondrion</keyword>
<keyword id="KW-0999">Mitochondrion inner membrane</keyword>
<keyword id="KW-0507">mRNA processing</keyword>
<keyword id="KW-1185">Reference proteome</keyword>
<keyword id="KW-0694">RNA-binding</keyword>
<keyword id="KW-0809">Transit peptide</keyword>
<keyword id="KW-0812">Transmembrane</keyword>
<keyword id="KW-1133">Transmembrane helix</keyword>
<gene>
    <name type="primary">msp-45</name>
    <name type="synonym">yme2</name>
    <name type="ORF">B18E6.070</name>
    <name type="ORF">NCU09598</name>
</gene>